<protein>
    <recommendedName>
        <fullName evidence="1">UPF0266 membrane protein YobD</fullName>
    </recommendedName>
</protein>
<feature type="chain" id="PRO_1000064582" description="UPF0266 membrane protein YobD">
    <location>
        <begin position="1"/>
        <end position="152"/>
    </location>
</feature>
<feature type="transmembrane region" description="Helical" evidence="1">
    <location>
        <begin position="6"/>
        <end position="26"/>
    </location>
</feature>
<feature type="transmembrane region" description="Helical" evidence="1">
    <location>
        <begin position="45"/>
        <end position="65"/>
    </location>
</feature>
<feature type="transmembrane region" description="Helical" evidence="1">
    <location>
        <begin position="67"/>
        <end position="87"/>
    </location>
</feature>
<name>YOBD_ECOL5</name>
<organism>
    <name type="scientific">Escherichia coli O6:K15:H31 (strain 536 / UPEC)</name>
    <dbReference type="NCBI Taxonomy" id="362663"/>
    <lineage>
        <taxon>Bacteria</taxon>
        <taxon>Pseudomonadati</taxon>
        <taxon>Pseudomonadota</taxon>
        <taxon>Gammaproteobacteria</taxon>
        <taxon>Enterobacterales</taxon>
        <taxon>Enterobacteriaceae</taxon>
        <taxon>Escherichia</taxon>
    </lineage>
</organism>
<comment type="subcellular location">
    <subcellularLocation>
        <location evidence="1">Cell inner membrane</location>
        <topology evidence="1">Multi-pass membrane protein</topology>
    </subcellularLocation>
</comment>
<comment type="similarity">
    <text evidence="1">Belongs to the UPF0266 family.</text>
</comment>
<keyword id="KW-0997">Cell inner membrane</keyword>
<keyword id="KW-1003">Cell membrane</keyword>
<keyword id="KW-0472">Membrane</keyword>
<keyword id="KW-0812">Transmembrane</keyword>
<keyword id="KW-1133">Transmembrane helix</keyword>
<evidence type="ECO:0000255" key="1">
    <source>
        <dbReference type="HAMAP-Rule" id="MF_01071"/>
    </source>
</evidence>
<reference key="1">
    <citation type="journal article" date="2006" name="Mol. Microbiol.">
        <title>Role of pathogenicity island-associated integrases in the genome plasticity of uropathogenic Escherichia coli strain 536.</title>
        <authorList>
            <person name="Hochhut B."/>
            <person name="Wilde C."/>
            <person name="Balling G."/>
            <person name="Middendorf B."/>
            <person name="Dobrindt U."/>
            <person name="Brzuszkiewicz E."/>
            <person name="Gottschalk G."/>
            <person name="Carniel E."/>
            <person name="Hacker J."/>
        </authorList>
    </citation>
    <scope>NUCLEOTIDE SEQUENCE [LARGE SCALE GENOMIC DNA]</scope>
    <source>
        <strain>536 / UPEC</strain>
    </source>
</reference>
<accession>Q0TH13</accession>
<proteinExistence type="inferred from homology"/>
<sequence length="152" mass="17601">MTITDLVLILFIAALLAFAIYDQFIMPRRNGPTLLAIPLLRRGRIDSVIFVGLIVILIYNNVTNHGALITTWLLSALALMGFYIFWIRVPKIIFKQKGFFFANVWIEYSRIKAMNLSEDGVLVMQLEQRRLLIRVRNIDDLEKVYKLLVSTQ</sequence>
<gene>
    <name evidence="1" type="primary">yobD</name>
    <name type="ordered locus">ECP_1763</name>
</gene>
<dbReference type="EMBL" id="CP000247">
    <property type="protein sequence ID" value="ABG69766.1"/>
    <property type="molecule type" value="Genomic_DNA"/>
</dbReference>
<dbReference type="RefSeq" id="WP_000156257.1">
    <property type="nucleotide sequence ID" value="NC_008253.1"/>
</dbReference>
<dbReference type="SMR" id="Q0TH13"/>
<dbReference type="KEGG" id="ecp:ECP_1763"/>
<dbReference type="HOGENOM" id="CLU_133645_0_0_6"/>
<dbReference type="Proteomes" id="UP000009182">
    <property type="component" value="Chromosome"/>
</dbReference>
<dbReference type="GO" id="GO:0005886">
    <property type="term" value="C:plasma membrane"/>
    <property type="evidence" value="ECO:0007669"/>
    <property type="project" value="UniProtKB-SubCell"/>
</dbReference>
<dbReference type="HAMAP" id="MF_01071">
    <property type="entry name" value="UPF0266"/>
    <property type="match status" value="1"/>
</dbReference>
<dbReference type="InterPro" id="IPR009328">
    <property type="entry name" value="DUF986"/>
</dbReference>
<dbReference type="NCBIfam" id="NF002791">
    <property type="entry name" value="PRK02913.1"/>
    <property type="match status" value="1"/>
</dbReference>
<dbReference type="Pfam" id="PF06173">
    <property type="entry name" value="DUF986"/>
    <property type="match status" value="1"/>
</dbReference>
<dbReference type="PIRSF" id="PIRSF020687">
    <property type="entry name" value="UCP020687"/>
    <property type="match status" value="1"/>
</dbReference>